<sequence length="394" mass="43284">MSKEKFERTKPHVNVGTIGHVDHGKTTLTAAITTVLAKTYGGAARAFDQIDNAPEEKARGITINTSHVEYDTPTRHYAHVDCPGHADYVKNMITGAAQMDGAILVVAATDGPMPQTREHILLGRQVGVPYIIVFLNKCDMVDDEELLELVEMEVRELLSQYDFPGDDTPIVRGSALKALEGDAEWEAKIIELAGFLDSYIPEPERAIDKPFLLPIEDVFSISGRGTVVTGRVERGIIKVGEEVEIVGIKETQKSTCTGVEMFRKLLDEGRAGENVGVLLRGIKREEIERGQVLAKPGTIKPHTKFESEVYILSKDEGGRHTPFFKGYRPQFYFRTTDVTGTIELPEGVEMVMPGDNIKMVVTLIHPIAMDDGLRFAIREGGRTVGAGVVAKVLG</sequence>
<evidence type="ECO:0000250" key="1"/>
<evidence type="ECO:0000255" key="2">
    <source>
        <dbReference type="HAMAP-Rule" id="MF_00118"/>
    </source>
</evidence>
<evidence type="ECO:0000305" key="3"/>
<reference key="1">
    <citation type="submission" date="2007-11" db="EMBL/GenBank/DDBJ databases">
        <authorList>
            <consortium name="The Salmonella enterica serovar Arizonae Genome Sequencing Project"/>
            <person name="McClelland M."/>
            <person name="Sanderson E.K."/>
            <person name="Porwollik S."/>
            <person name="Spieth J."/>
            <person name="Clifton W.S."/>
            <person name="Fulton R."/>
            <person name="Chunyan W."/>
            <person name="Wollam A."/>
            <person name="Shah N."/>
            <person name="Pepin K."/>
            <person name="Bhonagiri V."/>
            <person name="Nash W."/>
            <person name="Johnson M."/>
            <person name="Thiruvilangam P."/>
            <person name="Wilson R."/>
        </authorList>
    </citation>
    <scope>NUCLEOTIDE SEQUENCE [LARGE SCALE GENOMIC DNA]</scope>
    <source>
        <strain>ATCC BAA-731 / CDC346-86 / RSK2980</strain>
    </source>
</reference>
<name>EFTU_SALAR</name>
<feature type="chain" id="PRO_0000337512" description="Elongation factor Tu">
    <location>
        <begin position="1"/>
        <end position="394"/>
    </location>
</feature>
<feature type="domain" description="tr-type G">
    <location>
        <begin position="10"/>
        <end position="204"/>
    </location>
</feature>
<feature type="region of interest" description="G1" evidence="1">
    <location>
        <begin position="19"/>
        <end position="26"/>
    </location>
</feature>
<feature type="region of interest" description="G2" evidence="1">
    <location>
        <begin position="60"/>
        <end position="64"/>
    </location>
</feature>
<feature type="region of interest" description="G3" evidence="1">
    <location>
        <begin position="81"/>
        <end position="84"/>
    </location>
</feature>
<feature type="region of interest" description="G4" evidence="1">
    <location>
        <begin position="136"/>
        <end position="139"/>
    </location>
</feature>
<feature type="region of interest" description="G5" evidence="1">
    <location>
        <begin position="174"/>
        <end position="176"/>
    </location>
</feature>
<feature type="binding site" evidence="2">
    <location>
        <begin position="19"/>
        <end position="26"/>
    </location>
    <ligand>
        <name>GTP</name>
        <dbReference type="ChEBI" id="CHEBI:37565"/>
    </ligand>
</feature>
<feature type="binding site" evidence="2">
    <location>
        <position position="26"/>
    </location>
    <ligand>
        <name>Mg(2+)</name>
        <dbReference type="ChEBI" id="CHEBI:18420"/>
    </ligand>
</feature>
<feature type="binding site" evidence="2">
    <location>
        <begin position="81"/>
        <end position="85"/>
    </location>
    <ligand>
        <name>GTP</name>
        <dbReference type="ChEBI" id="CHEBI:37565"/>
    </ligand>
</feature>
<feature type="binding site" evidence="2">
    <location>
        <begin position="136"/>
        <end position="139"/>
    </location>
    <ligand>
        <name>GTP</name>
        <dbReference type="ChEBI" id="CHEBI:37565"/>
    </ligand>
</feature>
<comment type="function">
    <text evidence="2">GTP hydrolase that promotes the GTP-dependent binding of aminoacyl-tRNA to the A-site of ribosomes during protein biosynthesis.</text>
</comment>
<comment type="catalytic activity">
    <reaction evidence="2">
        <text>GTP + H2O = GDP + phosphate + H(+)</text>
        <dbReference type="Rhea" id="RHEA:19669"/>
        <dbReference type="ChEBI" id="CHEBI:15377"/>
        <dbReference type="ChEBI" id="CHEBI:15378"/>
        <dbReference type="ChEBI" id="CHEBI:37565"/>
        <dbReference type="ChEBI" id="CHEBI:43474"/>
        <dbReference type="ChEBI" id="CHEBI:58189"/>
        <dbReference type="EC" id="3.6.5.3"/>
    </reaction>
    <physiologicalReaction direction="left-to-right" evidence="2">
        <dbReference type="Rhea" id="RHEA:19670"/>
    </physiologicalReaction>
</comment>
<comment type="subunit">
    <text evidence="2">Monomer.</text>
</comment>
<comment type="subcellular location">
    <subcellularLocation>
        <location evidence="2">Cytoplasm</location>
    </subcellularLocation>
</comment>
<comment type="similarity">
    <text evidence="2">Belongs to the TRAFAC class translation factor GTPase superfamily. Classic translation factor GTPase family. EF-Tu/EF-1A subfamily.</text>
</comment>
<comment type="sequence caution" evidence="3">
    <conflict type="erroneous initiation">
        <sequence resource="EMBL-CDS" id="ABX23970"/>
    </conflict>
</comment>
<gene>
    <name evidence="2" type="primary">tuf1</name>
    <name type="ordered locus">SARI_03518</name>
</gene>
<gene>
    <name evidence="2" type="primary">tuf2</name>
    <name type="ordered locus">SARI_04181</name>
</gene>
<keyword id="KW-0963">Cytoplasm</keyword>
<keyword id="KW-0251">Elongation factor</keyword>
<keyword id="KW-0342">GTP-binding</keyword>
<keyword id="KW-0378">Hydrolase</keyword>
<keyword id="KW-0460">Magnesium</keyword>
<keyword id="KW-0479">Metal-binding</keyword>
<keyword id="KW-0547">Nucleotide-binding</keyword>
<keyword id="KW-0648">Protein biosynthesis</keyword>
<keyword id="KW-1185">Reference proteome</keyword>
<protein>
    <recommendedName>
        <fullName evidence="2">Elongation factor Tu</fullName>
        <shortName evidence="2">EF-Tu</shortName>
        <ecNumber evidence="2">3.6.5.3</ecNumber>
    </recommendedName>
</protein>
<accession>A9MHG0</accession>
<accession>A9MN41</accession>
<organism>
    <name type="scientific">Salmonella arizonae (strain ATCC BAA-731 / CDC346-86 / RSK2980)</name>
    <dbReference type="NCBI Taxonomy" id="41514"/>
    <lineage>
        <taxon>Bacteria</taxon>
        <taxon>Pseudomonadati</taxon>
        <taxon>Pseudomonadota</taxon>
        <taxon>Gammaproteobacteria</taxon>
        <taxon>Enterobacterales</taxon>
        <taxon>Enterobacteriaceae</taxon>
        <taxon>Salmonella</taxon>
    </lineage>
</organism>
<dbReference type="EC" id="3.6.5.3" evidence="2"/>
<dbReference type="EMBL" id="CP000880">
    <property type="protein sequence ID" value="ABX23343.1"/>
    <property type="molecule type" value="Genomic_DNA"/>
</dbReference>
<dbReference type="EMBL" id="CP000880">
    <property type="protein sequence ID" value="ABX23970.1"/>
    <property type="status" value="ALT_INIT"/>
    <property type="molecule type" value="Genomic_DNA"/>
</dbReference>
<dbReference type="SMR" id="A9MHG0"/>
<dbReference type="STRING" id="41514.SARI_03518"/>
<dbReference type="KEGG" id="ses:SARI_03518"/>
<dbReference type="KEGG" id="ses:SARI_04181"/>
<dbReference type="HOGENOM" id="CLU_007265_0_2_6"/>
<dbReference type="Proteomes" id="UP000002084">
    <property type="component" value="Chromosome"/>
</dbReference>
<dbReference type="GO" id="GO:0005829">
    <property type="term" value="C:cytosol"/>
    <property type="evidence" value="ECO:0007669"/>
    <property type="project" value="TreeGrafter"/>
</dbReference>
<dbReference type="GO" id="GO:0005525">
    <property type="term" value="F:GTP binding"/>
    <property type="evidence" value="ECO:0007669"/>
    <property type="project" value="UniProtKB-UniRule"/>
</dbReference>
<dbReference type="GO" id="GO:0003924">
    <property type="term" value="F:GTPase activity"/>
    <property type="evidence" value="ECO:0007669"/>
    <property type="project" value="InterPro"/>
</dbReference>
<dbReference type="GO" id="GO:0097216">
    <property type="term" value="F:guanosine tetraphosphate binding"/>
    <property type="evidence" value="ECO:0007669"/>
    <property type="project" value="UniProtKB-ARBA"/>
</dbReference>
<dbReference type="GO" id="GO:0003746">
    <property type="term" value="F:translation elongation factor activity"/>
    <property type="evidence" value="ECO:0007669"/>
    <property type="project" value="UniProtKB-UniRule"/>
</dbReference>
<dbReference type="CDD" id="cd01884">
    <property type="entry name" value="EF_Tu"/>
    <property type="match status" value="1"/>
</dbReference>
<dbReference type="CDD" id="cd03697">
    <property type="entry name" value="EFTU_II"/>
    <property type="match status" value="1"/>
</dbReference>
<dbReference type="CDD" id="cd03707">
    <property type="entry name" value="EFTU_III"/>
    <property type="match status" value="1"/>
</dbReference>
<dbReference type="FunFam" id="2.40.30.10:FF:000001">
    <property type="entry name" value="Elongation factor Tu"/>
    <property type="match status" value="1"/>
</dbReference>
<dbReference type="FunFam" id="3.40.50.300:FF:000003">
    <property type="entry name" value="Elongation factor Tu"/>
    <property type="match status" value="1"/>
</dbReference>
<dbReference type="Gene3D" id="3.40.50.300">
    <property type="entry name" value="P-loop containing nucleotide triphosphate hydrolases"/>
    <property type="match status" value="1"/>
</dbReference>
<dbReference type="Gene3D" id="2.40.30.10">
    <property type="entry name" value="Translation factors"/>
    <property type="match status" value="2"/>
</dbReference>
<dbReference type="HAMAP" id="MF_00118_B">
    <property type="entry name" value="EF_Tu_B"/>
    <property type="match status" value="1"/>
</dbReference>
<dbReference type="InterPro" id="IPR041709">
    <property type="entry name" value="EF-Tu_GTP-bd"/>
</dbReference>
<dbReference type="InterPro" id="IPR050055">
    <property type="entry name" value="EF-Tu_GTPase"/>
</dbReference>
<dbReference type="InterPro" id="IPR004161">
    <property type="entry name" value="EFTu-like_2"/>
</dbReference>
<dbReference type="InterPro" id="IPR033720">
    <property type="entry name" value="EFTU_2"/>
</dbReference>
<dbReference type="InterPro" id="IPR031157">
    <property type="entry name" value="G_TR_CS"/>
</dbReference>
<dbReference type="InterPro" id="IPR027417">
    <property type="entry name" value="P-loop_NTPase"/>
</dbReference>
<dbReference type="InterPro" id="IPR005225">
    <property type="entry name" value="Small_GTP-bd"/>
</dbReference>
<dbReference type="InterPro" id="IPR000795">
    <property type="entry name" value="T_Tr_GTP-bd_dom"/>
</dbReference>
<dbReference type="InterPro" id="IPR009000">
    <property type="entry name" value="Transl_B-barrel_sf"/>
</dbReference>
<dbReference type="InterPro" id="IPR009001">
    <property type="entry name" value="Transl_elong_EF1A/Init_IF2_C"/>
</dbReference>
<dbReference type="InterPro" id="IPR004541">
    <property type="entry name" value="Transl_elong_EFTu/EF1A_bac/org"/>
</dbReference>
<dbReference type="InterPro" id="IPR004160">
    <property type="entry name" value="Transl_elong_EFTu/EF1A_C"/>
</dbReference>
<dbReference type="NCBIfam" id="TIGR00485">
    <property type="entry name" value="EF-Tu"/>
    <property type="match status" value="1"/>
</dbReference>
<dbReference type="NCBIfam" id="NF000766">
    <property type="entry name" value="PRK00049.1"/>
    <property type="match status" value="1"/>
</dbReference>
<dbReference type="NCBIfam" id="NF009372">
    <property type="entry name" value="PRK12735.1"/>
    <property type="match status" value="1"/>
</dbReference>
<dbReference type="NCBIfam" id="NF009373">
    <property type="entry name" value="PRK12736.1"/>
    <property type="match status" value="1"/>
</dbReference>
<dbReference type="NCBIfam" id="TIGR00231">
    <property type="entry name" value="small_GTP"/>
    <property type="match status" value="1"/>
</dbReference>
<dbReference type="PANTHER" id="PTHR43721:SF22">
    <property type="entry name" value="ELONGATION FACTOR TU, MITOCHONDRIAL"/>
    <property type="match status" value="1"/>
</dbReference>
<dbReference type="PANTHER" id="PTHR43721">
    <property type="entry name" value="ELONGATION FACTOR TU-RELATED"/>
    <property type="match status" value="1"/>
</dbReference>
<dbReference type="Pfam" id="PF00009">
    <property type="entry name" value="GTP_EFTU"/>
    <property type="match status" value="1"/>
</dbReference>
<dbReference type="Pfam" id="PF03144">
    <property type="entry name" value="GTP_EFTU_D2"/>
    <property type="match status" value="1"/>
</dbReference>
<dbReference type="Pfam" id="PF03143">
    <property type="entry name" value="GTP_EFTU_D3"/>
    <property type="match status" value="1"/>
</dbReference>
<dbReference type="PRINTS" id="PR00315">
    <property type="entry name" value="ELONGATNFCT"/>
</dbReference>
<dbReference type="SUPFAM" id="SSF50465">
    <property type="entry name" value="EF-Tu/eEF-1alpha/eIF2-gamma C-terminal domain"/>
    <property type="match status" value="1"/>
</dbReference>
<dbReference type="SUPFAM" id="SSF52540">
    <property type="entry name" value="P-loop containing nucleoside triphosphate hydrolases"/>
    <property type="match status" value="1"/>
</dbReference>
<dbReference type="SUPFAM" id="SSF50447">
    <property type="entry name" value="Translation proteins"/>
    <property type="match status" value="1"/>
</dbReference>
<dbReference type="PROSITE" id="PS00301">
    <property type="entry name" value="G_TR_1"/>
    <property type="match status" value="1"/>
</dbReference>
<dbReference type="PROSITE" id="PS51722">
    <property type="entry name" value="G_TR_2"/>
    <property type="match status" value="1"/>
</dbReference>
<proteinExistence type="inferred from homology"/>